<comment type="cofactor">
    <cofactor evidence="4">
        <name>[4Fe-4S] cluster</name>
        <dbReference type="ChEBI" id="CHEBI:49883"/>
    </cofactor>
    <text evidence="4">Binds 1 [4Fe-4S] cluster. The cluster is coordinated with 3 cysteines and an exchangeable S-adenosyl-L-methionine.</text>
</comment>
<comment type="similarity">
    <text evidence="4">Belongs to the UPF0313 family.</text>
</comment>
<comment type="sequence caution" evidence="4">
    <conflict type="frameshift">
        <sequence resource="EMBL-CDS" id="AAA69183"/>
    </conflict>
</comment>
<comment type="sequence caution" evidence="4">
    <conflict type="frameshift">
        <sequence resource="EMBL-CDS" id="AAA69184"/>
    </conflict>
</comment>
<feature type="chain" id="PRO_0000076383" description="UPF0313 protein YgiQ">
    <location>
        <begin position="1"/>
        <end position="739"/>
    </location>
</feature>
<feature type="domain" description="Radical SAM core" evidence="2">
    <location>
        <begin position="372"/>
        <end position="650"/>
    </location>
</feature>
<feature type="region of interest" description="Disordered" evidence="3">
    <location>
        <begin position="685"/>
        <end position="739"/>
    </location>
</feature>
<feature type="compositionally biased region" description="Polar residues" evidence="3">
    <location>
        <begin position="704"/>
        <end position="724"/>
    </location>
</feature>
<feature type="compositionally biased region" description="Basic residues" evidence="3">
    <location>
        <begin position="729"/>
        <end position="739"/>
    </location>
</feature>
<feature type="binding site" evidence="1">
    <location>
        <position position="386"/>
    </location>
    <ligand>
        <name>[4Fe-4S] cluster</name>
        <dbReference type="ChEBI" id="CHEBI:49883"/>
        <note>4Fe-4S-S-AdoMet</note>
    </ligand>
</feature>
<feature type="binding site" evidence="1">
    <location>
        <position position="390"/>
    </location>
    <ligand>
        <name>[4Fe-4S] cluster</name>
        <dbReference type="ChEBI" id="CHEBI:49883"/>
        <note>4Fe-4S-S-AdoMet</note>
    </ligand>
</feature>
<feature type="binding site" evidence="1">
    <location>
        <position position="393"/>
    </location>
    <ligand>
        <name>[4Fe-4S] cluster</name>
        <dbReference type="ChEBI" id="CHEBI:49883"/>
        <note>4Fe-4S-S-AdoMet</note>
    </ligand>
</feature>
<evidence type="ECO:0000255" key="1"/>
<evidence type="ECO:0000255" key="2">
    <source>
        <dbReference type="PROSITE-ProRule" id="PRU01266"/>
    </source>
</evidence>
<evidence type="ECO:0000256" key="3">
    <source>
        <dbReference type="SAM" id="MobiDB-lite"/>
    </source>
</evidence>
<evidence type="ECO:0000305" key="4"/>
<accession>Q46861</accession>
<accession>Q2M9I4</accession>
<accession>Q46862</accession>
<accession>Q6BF53</accession>
<name>YGIQ_ECOLI</name>
<dbReference type="EMBL" id="U28377">
    <property type="protein sequence ID" value="AAA69183.1"/>
    <property type="status" value="ALT_FRAME"/>
    <property type="molecule type" value="Genomic_DNA"/>
</dbReference>
<dbReference type="EMBL" id="U28377">
    <property type="protein sequence ID" value="AAA69184.1"/>
    <property type="status" value="ALT_FRAME"/>
    <property type="molecule type" value="Genomic_DNA"/>
</dbReference>
<dbReference type="EMBL" id="U00096">
    <property type="protein sequence ID" value="AAT48161.1"/>
    <property type="molecule type" value="Genomic_DNA"/>
</dbReference>
<dbReference type="EMBL" id="AP009048">
    <property type="protein sequence ID" value="BAE77072.1"/>
    <property type="molecule type" value="Genomic_DNA"/>
</dbReference>
<dbReference type="RefSeq" id="WP_000095187.1">
    <property type="nucleotide sequence ID" value="NZ_STEB01000001.1"/>
</dbReference>
<dbReference type="RefSeq" id="YP_026196.1">
    <property type="nucleotide sequence ID" value="NC_000913.3"/>
</dbReference>
<dbReference type="BioGRID" id="4260933">
    <property type="interactions" value="35"/>
</dbReference>
<dbReference type="DIP" id="DIP-12224N"/>
<dbReference type="FunCoup" id="Q46861">
    <property type="interactions" value="36"/>
</dbReference>
<dbReference type="IntAct" id="Q46861">
    <property type="interactions" value="2"/>
</dbReference>
<dbReference type="STRING" id="511145.b4469"/>
<dbReference type="PaxDb" id="511145-b4469"/>
<dbReference type="EnsemblBacteria" id="AAT48161">
    <property type="protein sequence ID" value="AAT48161"/>
    <property type="gene ID" value="b4469"/>
</dbReference>
<dbReference type="GeneID" id="948963"/>
<dbReference type="KEGG" id="ecj:JW5501"/>
<dbReference type="KEGG" id="eco:b4469"/>
<dbReference type="KEGG" id="ecoc:C3026_16480"/>
<dbReference type="PATRIC" id="fig|1411691.4.peg.3714"/>
<dbReference type="EchoBASE" id="EB2838"/>
<dbReference type="eggNOG" id="COG1032">
    <property type="taxonomic scope" value="Bacteria"/>
</dbReference>
<dbReference type="HOGENOM" id="CLU_018288_2_0_6"/>
<dbReference type="InParanoid" id="Q46861"/>
<dbReference type="OMA" id="DSMVNRY"/>
<dbReference type="OrthoDB" id="9803479at2"/>
<dbReference type="PhylomeDB" id="Q46861"/>
<dbReference type="BioCyc" id="EcoCyc:G7568-MONOMER"/>
<dbReference type="PRO" id="PR:Q46861"/>
<dbReference type="Proteomes" id="UP000000625">
    <property type="component" value="Chromosome"/>
</dbReference>
<dbReference type="GO" id="GO:0051539">
    <property type="term" value="F:4 iron, 4 sulfur cluster binding"/>
    <property type="evidence" value="ECO:0007669"/>
    <property type="project" value="UniProtKB-KW"/>
</dbReference>
<dbReference type="GO" id="GO:0003824">
    <property type="term" value="F:catalytic activity"/>
    <property type="evidence" value="ECO:0007669"/>
    <property type="project" value="InterPro"/>
</dbReference>
<dbReference type="GO" id="GO:0005506">
    <property type="term" value="F:iron ion binding"/>
    <property type="evidence" value="ECO:0007669"/>
    <property type="project" value="UniProtKB-UniRule"/>
</dbReference>
<dbReference type="Gene3D" id="3.80.30.20">
    <property type="entry name" value="tm_1862 like domain"/>
    <property type="match status" value="1"/>
</dbReference>
<dbReference type="HAMAP" id="MF_01251">
    <property type="entry name" value="UPF0313"/>
    <property type="match status" value="1"/>
</dbReference>
<dbReference type="InterPro" id="IPR006638">
    <property type="entry name" value="Elp3/MiaA/NifB-like_rSAM"/>
</dbReference>
<dbReference type="InterPro" id="IPR020612">
    <property type="entry name" value="Methylthiotransferase_CS"/>
</dbReference>
<dbReference type="InterPro" id="IPR007197">
    <property type="entry name" value="rSAM"/>
</dbReference>
<dbReference type="InterPro" id="IPR023404">
    <property type="entry name" value="rSAM_horseshoe"/>
</dbReference>
<dbReference type="InterPro" id="IPR022946">
    <property type="entry name" value="UPF0313"/>
</dbReference>
<dbReference type="InterPro" id="IPR024560">
    <property type="entry name" value="UPF0313_C"/>
</dbReference>
<dbReference type="InterPro" id="IPR013704">
    <property type="entry name" value="UPF0313_N"/>
</dbReference>
<dbReference type="NCBIfam" id="TIGR03904">
    <property type="entry name" value="SAM_YgiQ"/>
    <property type="match status" value="1"/>
</dbReference>
<dbReference type="PANTHER" id="PTHR32331">
    <property type="entry name" value="UPF0313 PROTEIN YGIQ"/>
    <property type="match status" value="1"/>
</dbReference>
<dbReference type="PANTHER" id="PTHR32331:SF0">
    <property type="entry name" value="UPF0313 PROTEIN YGIQ"/>
    <property type="match status" value="1"/>
</dbReference>
<dbReference type="Pfam" id="PF11842">
    <property type="entry name" value="DUF3362"/>
    <property type="match status" value="1"/>
</dbReference>
<dbReference type="Pfam" id="PF04055">
    <property type="entry name" value="Radical_SAM"/>
    <property type="match status" value="1"/>
</dbReference>
<dbReference type="Pfam" id="PF08497">
    <property type="entry name" value="Radical_SAM_N"/>
    <property type="match status" value="1"/>
</dbReference>
<dbReference type="SFLD" id="SFLDG01082">
    <property type="entry name" value="B12-binding_domain_containing"/>
    <property type="match status" value="1"/>
</dbReference>
<dbReference type="SFLD" id="SFLDS00029">
    <property type="entry name" value="Radical_SAM"/>
    <property type="match status" value="1"/>
</dbReference>
<dbReference type="SFLD" id="SFLDG01069">
    <property type="entry name" value="UPF0313"/>
    <property type="match status" value="1"/>
</dbReference>
<dbReference type="SMART" id="SM00729">
    <property type="entry name" value="Elp3"/>
    <property type="match status" value="1"/>
</dbReference>
<dbReference type="SUPFAM" id="SSF102114">
    <property type="entry name" value="Radical SAM enzymes"/>
    <property type="match status" value="1"/>
</dbReference>
<dbReference type="PROSITE" id="PS51918">
    <property type="entry name" value="RADICAL_SAM"/>
    <property type="match status" value="1"/>
</dbReference>
<reference key="1">
    <citation type="journal article" date="1997" name="Science">
        <title>The complete genome sequence of Escherichia coli K-12.</title>
        <authorList>
            <person name="Blattner F.R."/>
            <person name="Plunkett G. III"/>
            <person name="Bloch C.A."/>
            <person name="Perna N.T."/>
            <person name="Burland V."/>
            <person name="Riley M."/>
            <person name="Collado-Vides J."/>
            <person name="Glasner J.D."/>
            <person name="Rode C.K."/>
            <person name="Mayhew G.F."/>
            <person name="Gregor J."/>
            <person name="Davis N.W."/>
            <person name="Kirkpatrick H.A."/>
            <person name="Goeden M.A."/>
            <person name="Rose D.J."/>
            <person name="Mau B."/>
            <person name="Shao Y."/>
        </authorList>
    </citation>
    <scope>NUCLEOTIDE SEQUENCE [LARGE SCALE GENOMIC DNA]</scope>
    <source>
        <strain>K12 / MG1655 / ATCC 47076</strain>
    </source>
</reference>
<reference key="2">
    <citation type="journal article" date="2006" name="Nucleic Acids Res.">
        <title>Escherichia coli K-12: a cooperatively developed annotation snapshot -- 2005.</title>
        <authorList>
            <person name="Riley M."/>
            <person name="Abe T."/>
            <person name="Arnaud M.B."/>
            <person name="Berlyn M.K.B."/>
            <person name="Blattner F.R."/>
            <person name="Chaudhuri R.R."/>
            <person name="Glasner J.D."/>
            <person name="Horiuchi T."/>
            <person name="Keseler I.M."/>
            <person name="Kosuge T."/>
            <person name="Mori H."/>
            <person name="Perna N.T."/>
            <person name="Plunkett G. III"/>
            <person name="Rudd K.E."/>
            <person name="Serres M.H."/>
            <person name="Thomas G.H."/>
            <person name="Thomson N.R."/>
            <person name="Wishart D."/>
            <person name="Wanner B.L."/>
        </authorList>
    </citation>
    <scope>SEQUENCE REVISION</scope>
</reference>
<reference key="3">
    <citation type="journal article" date="2006" name="Mol. Syst. Biol.">
        <title>Highly accurate genome sequences of Escherichia coli K-12 strains MG1655 and W3110.</title>
        <authorList>
            <person name="Hayashi K."/>
            <person name="Morooka N."/>
            <person name="Yamamoto Y."/>
            <person name="Fujita K."/>
            <person name="Isono K."/>
            <person name="Choi S."/>
            <person name="Ohtsubo E."/>
            <person name="Baba T."/>
            <person name="Wanner B.L."/>
            <person name="Mori H."/>
            <person name="Horiuchi T."/>
        </authorList>
    </citation>
    <scope>NUCLEOTIDE SEQUENCE [LARGE SCALE GENOMIC DNA]</scope>
    <source>
        <strain>K12 / W3110 / ATCC 27325 / DSM 5911</strain>
    </source>
</reference>
<protein>
    <recommendedName>
        <fullName>UPF0313 protein YgiQ</fullName>
    </recommendedName>
</protein>
<organism>
    <name type="scientific">Escherichia coli (strain K12)</name>
    <dbReference type="NCBI Taxonomy" id="83333"/>
    <lineage>
        <taxon>Bacteria</taxon>
        <taxon>Pseudomonadati</taxon>
        <taxon>Pseudomonadota</taxon>
        <taxon>Gammaproteobacteria</taxon>
        <taxon>Enterobacterales</taxon>
        <taxon>Enterobacteriaceae</taxon>
        <taxon>Escherichia</taxon>
    </lineage>
</organism>
<sequence>MSSISLIQPDRDLFSWPQYWAACFGPAPFLPMSREEMDQLGWDSCDIILVTGDAYVDHPSFGMAICGRMLEAQGFRVGIIAQPDWSSKDDFMRLGKPNLFFGVTAGNMDSMINRYTADRRLRHDDAYTPDNVAGKRPDRATLVYTQRCKEAWKDVPVILGGIEASLRRTAHYDYWSDTVRRSVLVDSKADMLMFGNGERPLVEVAHRLAMGEPISEIRDVRNTAIIVKEALPGWSGVDSTRLDTPGKIDPIPHPYGEDLPCADNKPVAPKKQEAKAVTVQPPRPKPWEKTYVLLPSFEKVKGDKVLYAHASRILHHETNPGCARALMQKHGDRYVWINPPAIPLSTEEMDSVFALPYKRVPHPAYGNARIPAYEMIRFSVNIMRGCFGGCSFCSITEHEGRIIQSRSEDSIINEIEAIRDTVPGFTGVISDLGGPTANMYMLRCKSPRAEQTCRRLSCVYPDICPHMDTNHEPTINLYRRARDLKGIKKILIASGVRYDIAVEDPRYIKELATHHVGGYLKIAPEHTEEGPLSKMMKPGMGSYDRFKELFDTYSKQAGKEQYLIPYFISAHPGTRDEDMVNLALWLKKHRFRLDQVQNFYPSPLANSTTMYYTGKNPLAKIGYKSEDVFVPKGDKQRRLHKALLRYHDPANWPLIRQALEAMGKKHLIGSRRDCLVPAPTIEEMREARRQNRNTRPALTKHTPMATQRQTPATAKKASSTQSRPVNAGAKKRPKAAVGR</sequence>
<keyword id="KW-0004">4Fe-4S</keyword>
<keyword id="KW-0408">Iron</keyword>
<keyword id="KW-0411">Iron-sulfur</keyword>
<keyword id="KW-0479">Metal-binding</keyword>
<keyword id="KW-1185">Reference proteome</keyword>
<keyword id="KW-0949">S-adenosyl-L-methionine</keyword>
<gene>
    <name type="primary">ygiQ</name>
    <name type="synonym">ygiR</name>
    <name type="ordered locus">b4469</name>
    <name type="ordered locus">JW5501</name>
</gene>
<proteinExistence type="inferred from homology"/>